<protein>
    <recommendedName>
        <fullName>Sodium/iodide cotransporter</fullName>
        <shortName>Na(+)/I(-) cotransporter</shortName>
    </recommendedName>
    <alternativeName>
        <fullName evidence="16">Natrium iodide transporter</fullName>
    </alternativeName>
    <alternativeName>
        <fullName evidence="18">Sodium-iodide symporter</fullName>
        <shortName>Na(+)/I(-) symporter</shortName>
    </alternativeName>
    <alternativeName>
        <fullName>Solute carrier family 5 member 5</fullName>
    </alternativeName>
</protein>
<proteinExistence type="evidence at protein level"/>
<accession>Q92911</accession>
<accession>O43702</accession>
<accession>Q2M335</accession>
<accession>Q9NYB6</accession>
<comment type="function">
    <text evidence="5 6 7 8 9 10 11 13">Sodium:iodide symporter that mediates the transport of iodide into the thyroid gland (PubMed:12488351, PubMed:18372236, PubMed:18708479, PubMed:20797386, PubMed:31310151, PubMed:32084174, PubMed:8806637, PubMed:9329364). Can also mediate the transport of chlorate, thiocynate, nitrate and selenocynate (PubMed:12488351).</text>
</comment>
<comment type="catalytic activity">
    <reaction evidence="5 6 7 8 9 10 11 13">
        <text>iodide(out) + 2 Na(+)(out) = iodide(in) + 2 Na(+)(in)</text>
        <dbReference type="Rhea" id="RHEA:71207"/>
        <dbReference type="ChEBI" id="CHEBI:16382"/>
        <dbReference type="ChEBI" id="CHEBI:29101"/>
    </reaction>
</comment>
<comment type="catalytic activity">
    <reaction evidence="5">
        <text>chlorate(out) + 2 Na(+)(out) = chlorate(in) + 2 Na(+)(in)</text>
        <dbReference type="Rhea" id="RHEA:71211"/>
        <dbReference type="ChEBI" id="CHEBI:29101"/>
        <dbReference type="ChEBI" id="CHEBI:49709"/>
    </reaction>
</comment>
<comment type="catalytic activity">
    <reaction evidence="5">
        <text>thiocyanate(out) + 2 Na(+)(out) = thiocyanate(in) + 2 Na(+)(in)</text>
        <dbReference type="Rhea" id="RHEA:71215"/>
        <dbReference type="ChEBI" id="CHEBI:18022"/>
        <dbReference type="ChEBI" id="CHEBI:29101"/>
    </reaction>
</comment>
<comment type="catalytic activity">
    <reaction evidence="5">
        <text>nitrate(out) + 2 Na(+)(out) = nitrate(in) + 2 Na(+)(in)</text>
        <dbReference type="Rhea" id="RHEA:71219"/>
        <dbReference type="ChEBI" id="CHEBI:17632"/>
        <dbReference type="ChEBI" id="CHEBI:29101"/>
    </reaction>
</comment>
<comment type="catalytic activity">
    <reaction evidence="5">
        <text>selenocyanate(out) + 2 Na(+)(out) = selenocyanate(in) + 2 Na(+)(in)</text>
        <dbReference type="Rhea" id="RHEA:71227"/>
        <dbReference type="ChEBI" id="CHEBI:29101"/>
        <dbReference type="ChEBI" id="CHEBI:29445"/>
    </reaction>
</comment>
<comment type="activity regulation">
    <text evidence="1 5 7 10">Dysidenin and perchlorate inhibit iodide transport activity (PubMed:12488351, PubMed:18708479, PubMed:32084174). Oxyanions inhibit iodide transport activity by blocking the binding sites for iodide and one of the sodium ions (By similarity).</text>
</comment>
<comment type="biophysicochemical properties">
    <kinetics>
        <KM evidence="6">9 uM for iodide</KM>
        <KM evidence="10">12 uM for iodide</KM>
        <KM evidence="6">81.6 mM for sodium</KM>
    </kinetics>
</comment>
<comment type="subunit">
    <text evidence="6 8 9">Monomer.</text>
</comment>
<comment type="interaction">
    <interactant intactId="EBI-12313867">
        <id>Q92911</id>
    </interactant>
    <interactant intactId="EBI-3867333">
        <id>A8MQ03</id>
        <label>CYSRT1</label>
    </interactant>
    <organismsDiffer>false</organismsDiffer>
    <experiments>3</experiments>
</comment>
<comment type="interaction">
    <interactant intactId="EBI-12313867">
        <id>Q92911</id>
    </interactant>
    <interactant intactId="EBI-22310682">
        <id>P0DPK4</id>
        <label>NOTCH2NLC</label>
    </interactant>
    <organismsDiffer>false</organismsDiffer>
    <experiments>3</experiments>
</comment>
<comment type="subcellular location">
    <subcellularLocation>
        <location evidence="6 7 8 9">Cell membrane</location>
        <topology evidence="1">Multi-pass membrane protein</topology>
    </subcellularLocation>
    <subcellularLocation>
        <location evidence="6 9">Cytoplasm</location>
    </subcellularLocation>
</comment>
<comment type="tissue specificity">
    <text evidence="11 13">Expression is primarily in thyroid tissue, but also to a lower extent in mammary gland and ovary. Expression is reduced in tumors.</text>
</comment>
<comment type="induction">
    <text evidence="13">Up-regulated by forskolin and thyrotropin (at protein level).</text>
</comment>
<comment type="PTM">
    <text evidence="6 8 9">Glycosylated.</text>
</comment>
<comment type="disease" evidence="4 12 14 15">
    <disease id="DI-00359">
        <name>Thyroid dyshormonogenesis 1</name>
        <acronym>TDH1</acronym>
        <description>A disorder characterized by the inability of the thyroid to maintain a concentration difference of readily exchangeable iodine between the plasma and the thyroid gland, leading to congenital hypothyroidism.</description>
        <dbReference type="MIM" id="274400"/>
    </disease>
    <text>The disease is caused by variants affecting the gene represented in this entry.</text>
</comment>
<comment type="similarity">
    <text evidence="20">Belongs to the sodium:solute symporter (SSF) (TC 2.A.21) family.</text>
</comment>
<comment type="online information" name="Atlas of Genetics and Cytogenetics in Oncology and Haematology">
    <link uri="https://atlasgeneticsoncology.org/gene/44476/SLC5A5"/>
</comment>
<sequence length="643" mass="68666">MEAVETGERPTFGAWDYGVFALMLLVSTGIGLWVGLARGGQRSAEDFFTGGRRLAALPVGLSLSASFMSAVQVLGVPSEAYRYGLKFLWMCLGQLLNSVLTALLFMPVFYRLGLTSTYEYLEMRFSRAVRLCGTLQYIVATMLYTGIVIYAPALILNQVTGLDIWASLLSTGIICTFYTAVGGMKAVVWTDVFQVVVMLSGFWVVLARGVMLVGGPRQVLTLAQNHSRINLMDFNPDPRSRYTFWTFVVGGTLVWLSMYGVNQAQVQRYVACRTEKQAKLALLINQVGLFLIVSSAACCGIVMFVFYTDCDPLLLGRISAPDQYMPLLVLDIFEDLPGVPGLFLACAYSGTLSTASTSINAMAAVTVEDLIKPRLRSLAPRKLVIISKGLSLIYGSACLTVAALSSLLGGGVLQGSFTVMGVISGPLLGAFILGMFLPACNTPGVLAGLGAGLALSLWVALGATLYPPSEQTMRVLPSSAARCVALSVNASGLLDPALLPANDSSRAPSSGMDASRPALADSFYAISYLYYGALGTLTTVLCGALISCLTGPTKRSTLAPGLLWWDLARQTASVAPKEEVAILDDNLVKGPEELPTGNKKPPGFLPTNEDRLFFLGQKELEGAGSWTPCVGHDGGRDQQETNL</sequence>
<keyword id="KW-1003">Cell membrane</keyword>
<keyword id="KW-0984">Congenital hypothyroidism</keyword>
<keyword id="KW-0963">Cytoplasm</keyword>
<keyword id="KW-0903">Direct protein sequencing</keyword>
<keyword id="KW-0225">Disease variant</keyword>
<keyword id="KW-0325">Glycoprotein</keyword>
<keyword id="KW-0406">Ion transport</keyword>
<keyword id="KW-0472">Membrane</keyword>
<keyword id="KW-0479">Metal-binding</keyword>
<keyword id="KW-0597">Phosphoprotein</keyword>
<keyword id="KW-1267">Proteomics identification</keyword>
<keyword id="KW-1185">Reference proteome</keyword>
<keyword id="KW-0915">Sodium</keyword>
<keyword id="KW-0739">Sodium transport</keyword>
<keyword id="KW-0769">Symport</keyword>
<keyword id="KW-0812">Transmembrane</keyword>
<keyword id="KW-1133">Transmembrane helix</keyword>
<keyword id="KW-0813">Transport</keyword>
<name>SC5A5_HUMAN</name>
<reference key="1">
    <citation type="journal article" date="1996" name="Biochem. Biophys. Res. Commun.">
        <title>Cloning of the human sodium iodide symporter.</title>
        <authorList>
            <person name="Smanik P.A."/>
            <person name="Liu Q."/>
            <person name="Furminger T.L."/>
            <person name="Ryu K."/>
            <person name="Xing S."/>
            <person name="Mazzaferri E.L."/>
            <person name="Jhiang S.M."/>
        </authorList>
    </citation>
    <scope>NUCLEOTIDE SEQUENCE [MRNA]</scope>
    <scope>TISSUE SPECIFICITY</scope>
    <scope>FUNCTION</scope>
    <scope>TRANSPORTER ACTIVITY</scope>
    <source>
        <tissue>Thyroid</tissue>
    </source>
</reference>
<reference key="2">
    <citation type="journal article" date="1997" name="J. Clin. Endocrinol. Metab.">
        <title>Increased expression of the Na+/I- symporter in cultured human thyroid cells exposed to thyrotropin and in Graves' thyroid tissue.</title>
        <authorList>
            <person name="Saito T."/>
            <person name="Endo T."/>
            <person name="Kawaguchi A."/>
            <person name="Ikeda M."/>
            <person name="Nakazato M."/>
            <person name="Kogai T."/>
            <person name="Onaya T."/>
        </authorList>
    </citation>
    <scope>NUCLEOTIDE SEQUENCE [MRNA]</scope>
    <scope>INDUCTION</scope>
    <scope>TISSUE SPECIFICITY</scope>
    <scope>FUNCTION</scope>
    <scope>TRANSPORTER ACTIVITY</scope>
    <scope>VARIANTS PRO-102; GLN-536 AND GLN-556</scope>
    <source>
        <tissue>Thyroid</tissue>
    </source>
</reference>
<reference key="3">
    <citation type="journal article" date="2004" name="Nature">
        <title>The DNA sequence and biology of human chromosome 19.</title>
        <authorList>
            <person name="Grimwood J."/>
            <person name="Gordon L.A."/>
            <person name="Olsen A.S."/>
            <person name="Terry A."/>
            <person name="Schmutz J."/>
            <person name="Lamerdin J.E."/>
            <person name="Hellsten U."/>
            <person name="Goodstein D."/>
            <person name="Couronne O."/>
            <person name="Tran-Gyamfi M."/>
            <person name="Aerts A."/>
            <person name="Altherr M."/>
            <person name="Ashworth L."/>
            <person name="Bajorek E."/>
            <person name="Black S."/>
            <person name="Branscomb E."/>
            <person name="Caenepeel S."/>
            <person name="Carrano A.V."/>
            <person name="Caoile C."/>
            <person name="Chan Y.M."/>
            <person name="Christensen M."/>
            <person name="Cleland C.A."/>
            <person name="Copeland A."/>
            <person name="Dalin E."/>
            <person name="Dehal P."/>
            <person name="Denys M."/>
            <person name="Detter J.C."/>
            <person name="Escobar J."/>
            <person name="Flowers D."/>
            <person name="Fotopulos D."/>
            <person name="Garcia C."/>
            <person name="Georgescu A.M."/>
            <person name="Glavina T."/>
            <person name="Gomez M."/>
            <person name="Gonzales E."/>
            <person name="Groza M."/>
            <person name="Hammon N."/>
            <person name="Hawkins T."/>
            <person name="Haydu L."/>
            <person name="Ho I."/>
            <person name="Huang W."/>
            <person name="Israni S."/>
            <person name="Jett J."/>
            <person name="Kadner K."/>
            <person name="Kimball H."/>
            <person name="Kobayashi A."/>
            <person name="Larionov V."/>
            <person name="Leem S.-H."/>
            <person name="Lopez F."/>
            <person name="Lou Y."/>
            <person name="Lowry S."/>
            <person name="Malfatti S."/>
            <person name="Martinez D."/>
            <person name="McCready P.M."/>
            <person name="Medina C."/>
            <person name="Morgan J."/>
            <person name="Nelson K."/>
            <person name="Nolan M."/>
            <person name="Ovcharenko I."/>
            <person name="Pitluck S."/>
            <person name="Pollard M."/>
            <person name="Popkie A.P."/>
            <person name="Predki P."/>
            <person name="Quan G."/>
            <person name="Ramirez L."/>
            <person name="Rash S."/>
            <person name="Retterer J."/>
            <person name="Rodriguez A."/>
            <person name="Rogers S."/>
            <person name="Salamov A."/>
            <person name="Salazar A."/>
            <person name="She X."/>
            <person name="Smith D."/>
            <person name="Slezak T."/>
            <person name="Solovyev V."/>
            <person name="Thayer N."/>
            <person name="Tice H."/>
            <person name="Tsai M."/>
            <person name="Ustaszewska A."/>
            <person name="Vo N."/>
            <person name="Wagner M."/>
            <person name="Wheeler J."/>
            <person name="Wu K."/>
            <person name="Xie G."/>
            <person name="Yang J."/>
            <person name="Dubchak I."/>
            <person name="Furey T.S."/>
            <person name="DeJong P."/>
            <person name="Dickson M."/>
            <person name="Gordon D."/>
            <person name="Eichler E.E."/>
            <person name="Pennacchio L.A."/>
            <person name="Richardson P."/>
            <person name="Stubbs L."/>
            <person name="Rokhsar D.S."/>
            <person name="Myers R.M."/>
            <person name="Rubin E.M."/>
            <person name="Lucas S.M."/>
        </authorList>
    </citation>
    <scope>NUCLEOTIDE SEQUENCE [LARGE SCALE GENOMIC DNA]</scope>
</reference>
<reference key="4">
    <citation type="journal article" date="2004" name="Genome Res.">
        <title>The status, quality, and expansion of the NIH full-length cDNA project: the Mammalian Gene Collection (MGC).</title>
        <authorList>
            <consortium name="The MGC Project Team"/>
        </authorList>
    </citation>
    <scope>NUCLEOTIDE SEQUENCE [LARGE SCALE MRNA]</scope>
    <source>
        <tissue>Brain</tissue>
    </source>
</reference>
<reference key="5">
    <citation type="submission" date="2000-04" db="EMBL/GenBank/DDBJ databases">
        <title>Characterization of 3'UTR region of the human NIS cDNA.</title>
        <authorList>
            <person name="Pauws E."/>
            <person name="Tol N.J."/>
            <person name="de Vijlder J.J.M."/>
            <person name="Ris-Stalpers C."/>
        </authorList>
    </citation>
    <scope>NUCLEOTIDE SEQUENCE [MRNA] OF 528-643</scope>
</reference>
<reference key="6">
    <citation type="journal article" date="2011" name="Biochim. Biophys. Acta">
        <title>Characterisation of the purified human sodium/iodide symporter reveals that the protein is mainly present in a dimeric form and permits the detailed study of a native C-terminal fragment.</title>
        <authorList>
            <person name="Huc-Brandt S."/>
            <person name="Marcellin D."/>
            <person name="Graslin F."/>
            <person name="Averseng O."/>
            <person name="Bellanger L."/>
            <person name="Hivin P."/>
            <person name="Quemeneur E."/>
            <person name="Basquin C."/>
            <person name="Navarro V."/>
            <person name="Pourcher T."/>
            <person name="Darrouzet E."/>
        </authorList>
    </citation>
    <scope>PROTEIN SEQUENCE OF 513-521</scope>
    <scope>FUNCTION</scope>
    <scope>TRANSPORTER ACTIVITY</scope>
    <scope>SUBUNIT</scope>
    <scope>SUBCELLULAR LOCATION</scope>
    <scope>GLYCOSYLATION</scope>
</reference>
<reference key="7">
    <citation type="journal article" date="2003" name="Endocrinology">
        <title>Anion selectivity by the sodium iodide symporter.</title>
        <authorList>
            <person name="Van Sande J."/>
            <person name="Massart C."/>
            <person name="Beauwens R."/>
            <person name="Schoutens A."/>
            <person name="Costagliola S."/>
            <person name="Dumont J.E."/>
            <person name="Wolff J."/>
        </authorList>
    </citation>
    <scope>FUNCTION</scope>
    <scope>TRANSPORTER ACTIVITY</scope>
    <scope>ACTIVITY REGULATION</scope>
</reference>
<reference key="8">
    <citation type="journal article" date="2008" name="J. Endocrinol.">
        <title>Comparison of expressed human and mouse sodium/iodide symporters reveals differences in transport properties and subcellular localization.</title>
        <authorList>
            <person name="Dayem M."/>
            <person name="Basquin C."/>
            <person name="Navarro V."/>
            <person name="Carrier P."/>
            <person name="Marsault R."/>
            <person name="Chang P."/>
            <person name="Huc S."/>
            <person name="Darrouzet E."/>
            <person name="Lindenthal S."/>
            <person name="Pourcher T."/>
        </authorList>
    </citation>
    <scope>FUNCTION</scope>
    <scope>TRANSPORTER ACTIVITY</scope>
    <scope>BIOPHYSICOCHEMICAL PROPERTIES</scope>
    <scope>SUBCELLULAR LOCATION</scope>
    <scope>SUBUNIT</scope>
    <scope>GLYCOSYLATION</scope>
</reference>
<reference key="9">
    <citation type="journal article" date="2008" name="J. Endocrinol.">
        <title>Histidine residue at position 226 is critical for iodide uptake activity of human sodium/iodide symporter.</title>
        <authorList>
            <person name="Wu S.L."/>
            <person name="Ho T.Y."/>
            <person name="Liang J.A."/>
            <person name="Hsiang C.Y."/>
        </authorList>
    </citation>
    <scope>FUNCTION</scope>
    <scope>TRANSPORTER ACTIVITY</scope>
    <scope>MUTAGENESIS OF HIS-226</scope>
    <scope>ACTIVITY REGULATION</scope>
</reference>
<reference key="10">
    <citation type="journal article" date="2019" name="Thyroid">
        <title>Dimerization of the Sodium/Iodide Symporter.</title>
        <authorList>
            <person name="Thompson R.J."/>
            <person name="Fletcher A."/>
            <person name="Brookes K."/>
            <person name="Nieto H."/>
            <person name="Alshahrani M.M."/>
            <person name="Mueller J.W."/>
            <person name="Fine N.H.F."/>
            <person name="Hodson D.J."/>
            <person name="Boelaert K."/>
            <person name="Read M.L."/>
            <person name="Smith V.E."/>
            <person name="McCabe C.J."/>
        </authorList>
    </citation>
    <scope>FUNCTION</scope>
    <scope>TRANSPORTER ACTIVITY</scope>
    <scope>SUBUNIT</scope>
    <scope>SUBCELLULAR LOCATION</scope>
    <scope>GLYCOSYLATION</scope>
    <scope>SITE</scope>
    <scope>MUTAGENESIS OF ASP-237; TYR-242; THR-243; GLN-471 AND ALA-525</scope>
</reference>
<reference key="11">
    <citation type="journal article" date="2020" name="PLoS ONE">
        <title>Inter-species variation in monovalent anion substrate selectivity and inhibitor sensitivity in the sodium iodide symporter (NIS).</title>
        <authorList>
            <person name="Concilio S.C."/>
            <person name="Zhekova H.R."/>
            <person name="Noskov S.Y."/>
            <person name="Russell S.J."/>
        </authorList>
    </citation>
    <scope>FUNCTION</scope>
    <scope>TRANSPORTER ACTIVITY</scope>
    <scope>ACTIVITY REGULATION</scope>
    <scope>BIOPHYSICOCHEMICAL PROPERTIES</scope>
</reference>
<reference key="12">
    <citation type="journal article" date="1997" name="Nat. Genet.">
        <title>Congenital hypothyroidism caused by a mutation in the Na(+)/I(-) symporter.</title>
        <authorList>
            <person name="Fujiwara H."/>
            <person name="Tatsumi K."/>
            <person name="Miki K."/>
            <person name="Harada T."/>
            <person name="Miyai K."/>
            <person name="Takai S."/>
            <person name="Amino N."/>
        </authorList>
    </citation>
    <scope>VARIANT TDH1 PRO-354</scope>
</reference>
<reference key="13">
    <citation type="journal article" date="1998" name="J. Clin. Endocrinol. Metab.">
        <title>Novel, missense and loss-of-function mutations in the sodium/iodide symporter gene causing iodide transport defect in three Japanese patients.</title>
        <authorList>
            <person name="Kosugi S."/>
            <person name="Inoue S."/>
            <person name="Matsuda A."/>
            <person name="Jhiang S.M."/>
        </authorList>
    </citation>
    <scope>VARIANTS TDH1 ARG-93; PRO-354 AND GLU-543</scope>
</reference>
<reference key="14">
    <citation type="journal article" date="1998" name="J. Clin. Invest.">
        <title>Congenital hypothyroidism due to mutations in the sodium/iodide symporter: identification of a nonsense mutation producing a downstream cryptic 3' splice site.</title>
        <authorList>
            <person name="Pohlenz J."/>
            <person name="Rosenthal I.M."/>
            <person name="Weiss R.E."/>
            <person name="Jhiang S.M."/>
            <person name="Burant C."/>
            <person name="Refetoff S."/>
        </authorList>
    </citation>
    <scope>VARIANT TDH1 GLU-267</scope>
</reference>
<reference key="15">
    <citation type="journal article" date="1999" name="J. Clin. Endocrinol. Metab.">
        <title>A novel mutation in the sodium/iodide symporter gene in the largest family with iodide transport defect.</title>
        <authorList>
            <person name="Kosugi S."/>
            <person name="Bhayana S."/>
            <person name="Dean H.J."/>
        </authorList>
    </citation>
    <scope>VARIANT TDH1 ARG-395</scope>
</reference>
<gene>
    <name type="primary">SLC5A5</name>
    <name evidence="17 19" type="synonym">NIS</name>
</gene>
<dbReference type="EMBL" id="U66088">
    <property type="protein sequence ID" value="AAB17378.1"/>
    <property type="molecule type" value="mRNA"/>
</dbReference>
<dbReference type="EMBL" id="AC005796">
    <property type="protein sequence ID" value="AAC62827.1"/>
    <property type="molecule type" value="Genomic_DNA"/>
</dbReference>
<dbReference type="EMBL" id="D87920">
    <property type="protein sequence ID" value="BAA24835.1"/>
    <property type="molecule type" value="mRNA"/>
</dbReference>
<dbReference type="EMBL" id="BC105047">
    <property type="protein sequence ID" value="AAI05048.1"/>
    <property type="molecule type" value="mRNA"/>
</dbReference>
<dbReference type="EMBL" id="BC105049">
    <property type="protein sequence ID" value="AAI05050.1"/>
    <property type="molecule type" value="mRNA"/>
</dbReference>
<dbReference type="EMBL" id="AF260700">
    <property type="protein sequence ID" value="AAF70339.1"/>
    <property type="molecule type" value="mRNA"/>
</dbReference>
<dbReference type="CCDS" id="CCDS12368.1"/>
<dbReference type="PIR" id="JC4974">
    <property type="entry name" value="JC4974"/>
</dbReference>
<dbReference type="RefSeq" id="NP_000444.1">
    <property type="nucleotide sequence ID" value="NM_000453.3"/>
</dbReference>
<dbReference type="SMR" id="Q92911"/>
<dbReference type="BioGRID" id="112419">
    <property type="interactions" value="159"/>
</dbReference>
<dbReference type="FunCoup" id="Q92911">
    <property type="interactions" value="183"/>
</dbReference>
<dbReference type="IntAct" id="Q92911">
    <property type="interactions" value="13"/>
</dbReference>
<dbReference type="STRING" id="9606.ENSP00000222248"/>
<dbReference type="DrugBank" id="DB05382">
    <property type="generic name" value="Iodine"/>
</dbReference>
<dbReference type="DrugBank" id="DB09418">
    <property type="generic name" value="Potassium perchlorate"/>
</dbReference>
<dbReference type="TCDB" id="2.A.21.5.1">
    <property type="family name" value="the solute:sodium symporter (sss) family"/>
</dbReference>
<dbReference type="GlyCosmos" id="Q92911">
    <property type="glycosylation" value="2 sites, No reported glycans"/>
</dbReference>
<dbReference type="GlyGen" id="Q92911">
    <property type="glycosylation" value="5 sites"/>
</dbReference>
<dbReference type="iPTMnet" id="Q92911"/>
<dbReference type="PhosphoSitePlus" id="Q92911"/>
<dbReference type="BioMuta" id="SLC5A5"/>
<dbReference type="DMDM" id="12643359"/>
<dbReference type="MassIVE" id="Q92911"/>
<dbReference type="PaxDb" id="9606-ENSP00000222248"/>
<dbReference type="PeptideAtlas" id="Q92911"/>
<dbReference type="ProteomicsDB" id="75594"/>
<dbReference type="Antibodypedia" id="14944">
    <property type="antibodies" value="526 antibodies from 31 providers"/>
</dbReference>
<dbReference type="DNASU" id="6528"/>
<dbReference type="Ensembl" id="ENST00000222248.4">
    <property type="protein sequence ID" value="ENSP00000222248.2"/>
    <property type="gene ID" value="ENSG00000105641.4"/>
</dbReference>
<dbReference type="GeneID" id="6528"/>
<dbReference type="KEGG" id="hsa:6528"/>
<dbReference type="MANE-Select" id="ENST00000222248.4">
    <property type="protein sequence ID" value="ENSP00000222248.2"/>
    <property type="RefSeq nucleotide sequence ID" value="NM_000453.3"/>
    <property type="RefSeq protein sequence ID" value="NP_000444.1"/>
</dbReference>
<dbReference type="UCSC" id="uc002nhr.4">
    <property type="organism name" value="human"/>
</dbReference>
<dbReference type="AGR" id="HGNC:11040"/>
<dbReference type="CTD" id="6528"/>
<dbReference type="DisGeNET" id="6528"/>
<dbReference type="GeneCards" id="SLC5A5"/>
<dbReference type="HGNC" id="HGNC:11040">
    <property type="gene designation" value="SLC5A5"/>
</dbReference>
<dbReference type="HPA" id="ENSG00000105641">
    <property type="expression patterns" value="Group enriched (choroid plexus, salivary gland, stomach)"/>
</dbReference>
<dbReference type="MalaCards" id="SLC5A5"/>
<dbReference type="MIM" id="274400">
    <property type="type" value="phenotype"/>
</dbReference>
<dbReference type="MIM" id="601843">
    <property type="type" value="gene"/>
</dbReference>
<dbReference type="neXtProt" id="NX_Q92911"/>
<dbReference type="OpenTargets" id="ENSG00000105641"/>
<dbReference type="Orphanet" id="95716">
    <property type="disease" value="Familial thyroid dyshormonogenesis"/>
</dbReference>
<dbReference type="PharmGKB" id="PA35905"/>
<dbReference type="VEuPathDB" id="HostDB:ENSG00000105641"/>
<dbReference type="eggNOG" id="KOG2349">
    <property type="taxonomic scope" value="Eukaryota"/>
</dbReference>
<dbReference type="GeneTree" id="ENSGT00940000159489"/>
<dbReference type="HOGENOM" id="CLU_018808_11_1_1"/>
<dbReference type="InParanoid" id="Q92911"/>
<dbReference type="OMA" id="FWFTIVL"/>
<dbReference type="OrthoDB" id="6132759at2759"/>
<dbReference type="PAN-GO" id="Q92911">
    <property type="GO annotations" value="3 GO annotations based on evolutionary models"/>
</dbReference>
<dbReference type="PhylomeDB" id="Q92911"/>
<dbReference type="TreeFam" id="TF316728"/>
<dbReference type="PathwayCommons" id="Q92911"/>
<dbReference type="Reactome" id="R-HSA-209968">
    <property type="pathway name" value="Thyroxine biosynthesis"/>
</dbReference>
<dbReference type="Reactome" id="R-HSA-428643">
    <property type="pathway name" value="Organic anion transporters"/>
</dbReference>
<dbReference type="Reactome" id="R-HSA-5619096">
    <property type="pathway name" value="Defective SLC5A5 causes thyroid dyshormonogenesis 1 (TDH1)"/>
</dbReference>
<dbReference type="SignaLink" id="Q92911"/>
<dbReference type="SIGNOR" id="Q92911"/>
<dbReference type="BioGRID-ORCS" id="6528">
    <property type="hits" value="11 hits in 1152 CRISPR screens"/>
</dbReference>
<dbReference type="ChiTaRS" id="SLC5A5">
    <property type="organism name" value="human"/>
</dbReference>
<dbReference type="GeneWiki" id="Sodium-iodide_symporter"/>
<dbReference type="GenomeRNAi" id="6528"/>
<dbReference type="Pharos" id="Q92911">
    <property type="development level" value="Tbio"/>
</dbReference>
<dbReference type="PRO" id="PR:Q92911"/>
<dbReference type="Proteomes" id="UP000005640">
    <property type="component" value="Chromosome 19"/>
</dbReference>
<dbReference type="RNAct" id="Q92911">
    <property type="molecule type" value="protein"/>
</dbReference>
<dbReference type="Bgee" id="ENSG00000105641">
    <property type="expression patterns" value="Expressed in mucosa of stomach and 84 other cell types or tissues"/>
</dbReference>
<dbReference type="GO" id="GO:0005737">
    <property type="term" value="C:cytoplasm"/>
    <property type="evidence" value="ECO:0000314"/>
    <property type="project" value="UniProtKB"/>
</dbReference>
<dbReference type="GO" id="GO:0070062">
    <property type="term" value="C:extracellular exosome"/>
    <property type="evidence" value="ECO:0007005"/>
    <property type="project" value="UniProtKB"/>
</dbReference>
<dbReference type="GO" id="GO:1903561">
    <property type="term" value="C:extracellular vesicle"/>
    <property type="evidence" value="ECO:0007005"/>
    <property type="project" value="UniProtKB"/>
</dbReference>
<dbReference type="GO" id="GO:0016020">
    <property type="term" value="C:membrane"/>
    <property type="evidence" value="ECO:0000304"/>
    <property type="project" value="ProtInc"/>
</dbReference>
<dbReference type="GO" id="GO:0005634">
    <property type="term" value="C:nucleus"/>
    <property type="evidence" value="ECO:0000314"/>
    <property type="project" value="UniProtKB"/>
</dbReference>
<dbReference type="GO" id="GO:0005886">
    <property type="term" value="C:plasma membrane"/>
    <property type="evidence" value="ECO:0000314"/>
    <property type="project" value="UniProtKB"/>
</dbReference>
<dbReference type="GO" id="GO:0015111">
    <property type="term" value="F:iodide transmembrane transporter activity"/>
    <property type="evidence" value="ECO:0000314"/>
    <property type="project" value="ARUK-UCL"/>
</dbReference>
<dbReference type="GO" id="GO:0015373">
    <property type="term" value="F:monoatomic anion:sodium symporter activity"/>
    <property type="evidence" value="ECO:0000314"/>
    <property type="project" value="UniProtKB"/>
</dbReference>
<dbReference type="GO" id="GO:0042803">
    <property type="term" value="F:protein homodimerization activity"/>
    <property type="evidence" value="ECO:0000314"/>
    <property type="project" value="UniProtKB"/>
</dbReference>
<dbReference type="GO" id="GO:0008507">
    <property type="term" value="F:sodium:iodide symporter activity"/>
    <property type="evidence" value="ECO:0000314"/>
    <property type="project" value="UniProtKB"/>
</dbReference>
<dbReference type="GO" id="GO:0071320">
    <property type="term" value="P:cellular response to cAMP"/>
    <property type="evidence" value="ECO:0000270"/>
    <property type="project" value="UniProtKB"/>
</dbReference>
<dbReference type="GO" id="GO:1904322">
    <property type="term" value="P:cellular response to forskolin"/>
    <property type="evidence" value="ECO:0000314"/>
    <property type="project" value="UniProtKB"/>
</dbReference>
<dbReference type="GO" id="GO:0071371">
    <property type="term" value="P:cellular response to gonadotropin stimulus"/>
    <property type="evidence" value="ECO:0000270"/>
    <property type="project" value="UniProtKB"/>
</dbReference>
<dbReference type="GO" id="GO:1904401">
    <property type="term" value="P:cellular response to Thyroid stimulating hormone"/>
    <property type="evidence" value="ECO:0000314"/>
    <property type="project" value="UniProtKB"/>
</dbReference>
<dbReference type="GO" id="GO:1904200">
    <property type="term" value="P:iodide transmembrane transport"/>
    <property type="evidence" value="ECO:0000314"/>
    <property type="project" value="ARUK-UCL"/>
</dbReference>
<dbReference type="GO" id="GO:0015705">
    <property type="term" value="P:iodide transport"/>
    <property type="evidence" value="ECO:0000315"/>
    <property type="project" value="UniProtKB"/>
</dbReference>
<dbReference type="GO" id="GO:0006811">
    <property type="term" value="P:monoatomic ion transport"/>
    <property type="evidence" value="ECO:0000304"/>
    <property type="project" value="Reactome"/>
</dbReference>
<dbReference type="GO" id="GO:0006814">
    <property type="term" value="P:sodium ion transport"/>
    <property type="evidence" value="ECO:0000318"/>
    <property type="project" value="GO_Central"/>
</dbReference>
<dbReference type="GO" id="GO:0006590">
    <property type="term" value="P:thyroid hormone generation"/>
    <property type="evidence" value="ECO:0000304"/>
    <property type="project" value="Reactome"/>
</dbReference>
<dbReference type="GO" id="GO:0150104">
    <property type="term" value="P:transport across blood-brain barrier"/>
    <property type="evidence" value="ECO:0000303"/>
    <property type="project" value="ARUK-UCL"/>
</dbReference>
<dbReference type="CDD" id="cd11503">
    <property type="entry name" value="SLC5sbd_NIS"/>
    <property type="match status" value="1"/>
</dbReference>
<dbReference type="FunFam" id="1.20.1730.10:FF:000007">
    <property type="entry name" value="Sodium-coupled monocarboxylate transporter 2"/>
    <property type="match status" value="1"/>
</dbReference>
<dbReference type="Gene3D" id="1.20.1730.10">
    <property type="entry name" value="Sodium/glucose cotransporter"/>
    <property type="match status" value="1"/>
</dbReference>
<dbReference type="InterPro" id="IPR038377">
    <property type="entry name" value="Na/Glc_symporter_sf"/>
</dbReference>
<dbReference type="InterPro" id="IPR001734">
    <property type="entry name" value="Na/solute_symporter"/>
</dbReference>
<dbReference type="InterPro" id="IPR018212">
    <property type="entry name" value="Na/solute_symporter_CS"/>
</dbReference>
<dbReference type="InterPro" id="IPR035689">
    <property type="entry name" value="SLC5A5"/>
</dbReference>
<dbReference type="InterPro" id="IPR051163">
    <property type="entry name" value="Sodium:Solute_Symporter_SSF"/>
</dbReference>
<dbReference type="NCBIfam" id="TIGR00813">
    <property type="entry name" value="sss"/>
    <property type="match status" value="1"/>
</dbReference>
<dbReference type="PANTHER" id="PTHR42985">
    <property type="entry name" value="SODIUM-COUPLED MONOCARBOXYLATE TRANSPORTER"/>
    <property type="match status" value="1"/>
</dbReference>
<dbReference type="PANTHER" id="PTHR42985:SF11">
    <property type="entry name" value="SODIUM_IODIDE COTRANSPORTER"/>
    <property type="match status" value="1"/>
</dbReference>
<dbReference type="Pfam" id="PF00474">
    <property type="entry name" value="SSF"/>
    <property type="match status" value="1"/>
</dbReference>
<dbReference type="PROSITE" id="PS00456">
    <property type="entry name" value="NA_SOLUT_SYMP_1"/>
    <property type="match status" value="1"/>
</dbReference>
<dbReference type="PROSITE" id="PS50283">
    <property type="entry name" value="NA_SOLUT_SYMP_3"/>
    <property type="match status" value="1"/>
</dbReference>
<evidence type="ECO:0000250" key="1">
    <source>
        <dbReference type="UniProtKB" id="Q63008"/>
    </source>
</evidence>
<evidence type="ECO:0000255" key="2"/>
<evidence type="ECO:0000256" key="3">
    <source>
        <dbReference type="SAM" id="MobiDB-lite"/>
    </source>
</evidence>
<evidence type="ECO:0000269" key="4">
    <source>
    </source>
</evidence>
<evidence type="ECO:0000269" key="5">
    <source>
    </source>
</evidence>
<evidence type="ECO:0000269" key="6">
    <source>
    </source>
</evidence>
<evidence type="ECO:0000269" key="7">
    <source>
    </source>
</evidence>
<evidence type="ECO:0000269" key="8">
    <source>
    </source>
</evidence>
<evidence type="ECO:0000269" key="9">
    <source>
    </source>
</evidence>
<evidence type="ECO:0000269" key="10">
    <source>
    </source>
</evidence>
<evidence type="ECO:0000269" key="11">
    <source>
    </source>
</evidence>
<evidence type="ECO:0000269" key="12">
    <source>
    </source>
</evidence>
<evidence type="ECO:0000269" key="13">
    <source>
    </source>
</evidence>
<evidence type="ECO:0000269" key="14">
    <source>
    </source>
</evidence>
<evidence type="ECO:0000269" key="15">
    <source>
    </source>
</evidence>
<evidence type="ECO:0000303" key="16">
    <source>
    </source>
</evidence>
<evidence type="ECO:0000303" key="17">
    <source>
    </source>
</evidence>
<evidence type="ECO:0000303" key="18">
    <source>
    </source>
</evidence>
<evidence type="ECO:0000303" key="19">
    <source ref="5"/>
</evidence>
<evidence type="ECO:0000305" key="20"/>
<organism>
    <name type="scientific">Homo sapiens</name>
    <name type="common">Human</name>
    <dbReference type="NCBI Taxonomy" id="9606"/>
    <lineage>
        <taxon>Eukaryota</taxon>
        <taxon>Metazoa</taxon>
        <taxon>Chordata</taxon>
        <taxon>Craniata</taxon>
        <taxon>Vertebrata</taxon>
        <taxon>Euteleostomi</taxon>
        <taxon>Mammalia</taxon>
        <taxon>Eutheria</taxon>
        <taxon>Euarchontoglires</taxon>
        <taxon>Primates</taxon>
        <taxon>Haplorrhini</taxon>
        <taxon>Catarrhini</taxon>
        <taxon>Hominidae</taxon>
        <taxon>Homo</taxon>
    </lineage>
</organism>
<feature type="chain" id="PRO_0000105383" description="Sodium/iodide cotransporter">
    <location>
        <begin position="1"/>
        <end position="643"/>
    </location>
</feature>
<feature type="topological domain" description="Extracellular" evidence="1">
    <location>
        <begin position="1"/>
        <end position="14"/>
    </location>
</feature>
<feature type="transmembrane region" description="Helical; Name=1" evidence="1">
    <location>
        <begin position="15"/>
        <end position="31"/>
    </location>
</feature>
<feature type="topological domain" description="Cytoplasmic" evidence="1">
    <location>
        <begin position="32"/>
        <end position="56"/>
    </location>
</feature>
<feature type="transmembrane region" description="Discontinuously helical; Name=2" evidence="1">
    <location>
        <begin position="57"/>
        <end position="80"/>
    </location>
</feature>
<feature type="topological domain" description="Extracellular" evidence="1">
    <location>
        <begin position="81"/>
        <end position="84"/>
    </location>
</feature>
<feature type="transmembrane region" description="Helical; Name=3" evidence="1">
    <location>
        <begin position="85"/>
        <end position="105"/>
    </location>
</feature>
<feature type="topological domain" description="Cytoplasmic" evidence="1">
    <location>
        <begin position="106"/>
        <end position="130"/>
    </location>
</feature>
<feature type="transmembrane region" description="Helical; Name=4" evidence="1">
    <location>
        <begin position="131"/>
        <end position="157"/>
    </location>
</feature>
<feature type="topological domain" description="Extracellular" evidence="1">
    <location>
        <begin position="158"/>
        <end position="163"/>
    </location>
</feature>
<feature type="transmembrane region" description="Helical; Name=5" evidence="1">
    <location>
        <begin position="164"/>
        <end position="181"/>
    </location>
</feature>
<feature type="topological domain" description="Cytoplasmic" evidence="1">
    <location>
        <begin position="182"/>
        <end position="189"/>
    </location>
</feature>
<feature type="transmembrane region" description="Helical; Name=6" evidence="1">
    <location>
        <begin position="190"/>
        <end position="208"/>
    </location>
</feature>
<feature type="topological domain" description="Extracellular" evidence="1">
    <location>
        <begin position="209"/>
        <end position="243"/>
    </location>
</feature>
<feature type="transmembrane region" description="Discontinuously helical; Name=7" evidence="1">
    <location>
        <begin position="244"/>
        <end position="266"/>
    </location>
</feature>
<feature type="topological domain" description="Cytoplasmic" evidence="1">
    <location>
        <begin position="267"/>
        <end position="278"/>
    </location>
</feature>
<feature type="transmembrane region" description="Helical; Name=8" evidence="1">
    <location>
        <begin position="279"/>
        <end position="301"/>
    </location>
</feature>
<feature type="topological domain" description="Extracellular" evidence="1">
    <location>
        <begin position="302"/>
        <end position="335"/>
    </location>
</feature>
<feature type="transmembrane region" description="Helical; Name=9" evidence="1">
    <location>
        <begin position="336"/>
        <end position="363"/>
    </location>
</feature>
<feature type="topological domain" description="Cytoplasmic" evidence="1">
    <location>
        <begin position="364"/>
        <end position="386"/>
    </location>
</feature>
<feature type="transmembrane region" description="Helical; Name=10" evidence="1">
    <location>
        <begin position="387"/>
        <end position="408"/>
    </location>
</feature>
<feature type="topological domain" description="Extracellular" evidence="1">
    <location>
        <begin position="409"/>
        <end position="411"/>
    </location>
</feature>
<feature type="transmembrane region" description="Helical; Name=11" evidence="1">
    <location>
        <begin position="412"/>
        <end position="437"/>
    </location>
</feature>
<feature type="topological domain" description="Cytoplasmic" evidence="1">
    <location>
        <begin position="438"/>
        <end position="441"/>
    </location>
</feature>
<feature type="transmembrane region" description="Helical; Name=12" evidence="1">
    <location>
        <begin position="442"/>
        <end position="465"/>
    </location>
</feature>
<feature type="topological domain" description="Extracellular" evidence="1">
    <location>
        <begin position="466"/>
        <end position="525"/>
    </location>
</feature>
<feature type="transmembrane region" description="Helical; Name=13" evidence="1">
    <location>
        <begin position="526"/>
        <end position="550"/>
    </location>
</feature>
<feature type="topological domain" description="Cytoplasmic" evidence="1">
    <location>
        <begin position="551"/>
        <end position="643"/>
    </location>
</feature>
<feature type="region of interest" description="Disordered" evidence="3">
    <location>
        <begin position="623"/>
        <end position="643"/>
    </location>
</feature>
<feature type="compositionally biased region" description="Basic and acidic residues" evidence="3">
    <location>
        <begin position="633"/>
        <end position="643"/>
    </location>
</feature>
<feature type="binding site" evidence="1">
    <location>
        <position position="69"/>
    </location>
    <ligand>
        <name>Na(+)</name>
        <dbReference type="ChEBI" id="CHEBI:29101"/>
        <label>1</label>
    </ligand>
</feature>
<feature type="binding site" evidence="1">
    <location>
        <position position="71"/>
    </location>
    <ligand>
        <name>Na(+)</name>
        <dbReference type="ChEBI" id="CHEBI:29101"/>
        <label>1</label>
    </ligand>
</feature>
<feature type="binding site" evidence="1">
    <location>
        <position position="72"/>
    </location>
    <ligand>
        <name>Na(+)</name>
        <dbReference type="ChEBI" id="CHEBI:29101"/>
        <label>1</label>
    </ligand>
</feature>
<feature type="binding site" evidence="1">
    <location>
        <position position="72"/>
    </location>
    <ligand>
        <name>Na(+)</name>
        <dbReference type="ChEBI" id="CHEBI:29101"/>
        <label>2</label>
    </ligand>
</feature>
<feature type="binding site" evidence="1">
    <location>
        <position position="76"/>
    </location>
    <ligand>
        <name>iodide</name>
        <dbReference type="ChEBI" id="CHEBI:16382"/>
    </ligand>
</feature>
<feature type="binding site" evidence="1">
    <location>
        <position position="90"/>
    </location>
    <ligand>
        <name>iodide</name>
        <dbReference type="ChEBI" id="CHEBI:16382"/>
    </ligand>
</feature>
<feature type="binding site" evidence="1">
    <location>
        <position position="144"/>
    </location>
    <ligand>
        <name>Na(+)</name>
        <dbReference type="ChEBI" id="CHEBI:29101"/>
        <label>1</label>
    </ligand>
</feature>
<feature type="binding site" evidence="1">
    <location>
        <position position="144"/>
    </location>
    <ligand>
        <name>Na(+)</name>
        <dbReference type="ChEBI" id="CHEBI:29101"/>
        <label>2</label>
    </ligand>
</feature>
<feature type="binding site" evidence="1">
    <location>
        <position position="255"/>
    </location>
    <ligand>
        <name>iodide</name>
        <dbReference type="ChEBI" id="CHEBI:16382"/>
    </ligand>
</feature>
<feature type="binding site" evidence="1">
    <location>
        <position position="258"/>
    </location>
    <ligand>
        <name>Na(+)</name>
        <dbReference type="ChEBI" id="CHEBI:29101"/>
        <label>2</label>
    </ligand>
</feature>
<feature type="binding site" evidence="1">
    <location>
        <position position="413"/>
    </location>
    <ligand>
        <name>iodide</name>
        <dbReference type="ChEBI" id="CHEBI:16382"/>
    </ligand>
</feature>
<feature type="binding site" evidence="1">
    <location>
        <position position="416"/>
    </location>
    <ligand>
        <name>Na(+)</name>
        <dbReference type="ChEBI" id="CHEBI:29101"/>
        <label>2</label>
    </ligand>
</feature>
<feature type="binding site" evidence="1">
    <location>
        <position position="417"/>
    </location>
    <ligand>
        <name>iodide</name>
        <dbReference type="ChEBI" id="CHEBI:16382"/>
    </ligand>
</feature>
<feature type="binding site" evidence="1">
    <location>
        <position position="417"/>
    </location>
    <ligand>
        <name>Na(+)</name>
        <dbReference type="ChEBI" id="CHEBI:29101"/>
        <label>2</label>
    </ligand>
</feature>
<feature type="modified residue" description="Phosphoserine; by PKA" evidence="2">
    <location>
        <position position="556"/>
    </location>
</feature>
<feature type="glycosylation site" description="N-linked (GlcNAc...) asparagine" evidence="2">
    <location>
        <position position="489"/>
    </location>
</feature>
<feature type="glycosylation site" description="N-linked (GlcNAc...) asparagine" evidence="2">
    <location>
        <position position="502"/>
    </location>
</feature>
<feature type="sequence variant" id="VAR_010263" description="In TDH1; dbSNP:rs121909178." evidence="15">
    <original>G</original>
    <variation>R</variation>
    <location>
        <position position="93"/>
    </location>
</feature>
<feature type="sequence variant" id="VAR_010264" evidence="13">
    <original>A</original>
    <variation>P</variation>
    <location>
        <position position="102"/>
    </location>
</feature>
<feature type="sequence variant" id="VAR_010265" description="In TDH1; dbSNP:rs121909176." evidence="14">
    <original>Q</original>
    <variation>E</variation>
    <location>
        <position position="267"/>
    </location>
</feature>
<feature type="sequence variant" id="VAR_052490" description="In dbSNP:rs8108188.">
    <original>C</original>
    <variation>G</variation>
    <location>
        <position position="298"/>
    </location>
</feature>
<feature type="sequence variant" id="VAR_010266" description="In TDH1; dbSNP:rs121909174." evidence="12 15">
    <original>T</original>
    <variation>P</variation>
    <location>
        <position position="354"/>
    </location>
</feature>
<feature type="sequence variant" id="VAR_010267" description="In TDH1; dbSNP:rs121909180." evidence="4">
    <original>G</original>
    <variation>R</variation>
    <location>
        <position position="395"/>
    </location>
</feature>
<feature type="sequence variant" id="VAR_010268" description="Requires 2 nucleotide substitutions." evidence="13">
    <original>T</original>
    <variation>Q</variation>
    <location>
        <position position="536"/>
    </location>
</feature>
<feature type="sequence variant" id="VAR_010269" description="In TDH1; dbSNP:rs121909179." evidence="15">
    <original>G</original>
    <variation>E</variation>
    <location>
        <position position="543"/>
    </location>
</feature>
<feature type="sequence variant" id="VAR_010270" description="Requires 2 nucleotide substitutions." evidence="13">
    <original>S</original>
    <variation>Q</variation>
    <location>
        <position position="556"/>
    </location>
</feature>
<feature type="mutagenesis site" description="Significant loss of iodide transport activity but no effect on its localization to the cell membrane." evidence="7">
    <original>H</original>
    <variation>A</variation>
    <variation>D</variation>
    <variation>E</variation>
    <variation>K</variation>
    <location>
        <position position="226"/>
    </location>
</feature>
<feature type="mutagenesis site" description="Loss of localization to the cell membrane, significant loss of iodide transport activity but no effect on homodimerization." evidence="9">
    <original>D</original>
    <variation>A</variation>
    <location>
        <position position="237"/>
    </location>
</feature>
<feature type="mutagenesis site" description="Loss of localization to the cell membrane, significant loss of iodide transport activity but no effect on homodimerization. Reduced homodimerization; when associated with A-471. Loss of iodide transport activity; when associated with F-535." evidence="9">
    <original>Y</original>
    <variation>A</variation>
    <location>
        <position position="242"/>
    </location>
</feature>
<feature type="mutagenesis site" description="Loss of localization to the cell membrane, significant loss of iodide transport activity but no effect on homodimerization. Reduced homodimerization; when associated with A-471." evidence="9">
    <original>T</original>
    <variation>A</variation>
    <location>
        <position position="243"/>
    </location>
</feature>
<feature type="mutagenesis site" description="No effect on localization to the cell membrane, iodide transport activity and homodimerization. Significant loss of homodimerization; when associated with A-242 or A243." evidence="9">
    <original>Q</original>
    <variation>A</variation>
    <location>
        <position position="471"/>
    </location>
</feature>
<feature type="mutagenesis site" description="Loss of localization to the cell membrane, significant loss of iodide transport activity but no effect on homodimerization. Loss of iodide transport activity; when associated with A-242." evidence="9">
    <original>A</original>
    <variation>F</variation>
    <location>
        <position position="525"/>
    </location>
</feature>